<gene>
    <name evidence="1" type="primary">yqgE</name>
    <name type="ordered locus">EcHS_A3106</name>
</gene>
<evidence type="ECO:0000255" key="1">
    <source>
        <dbReference type="HAMAP-Rule" id="MF_00758"/>
    </source>
</evidence>
<organism>
    <name type="scientific">Escherichia coli O9:H4 (strain HS)</name>
    <dbReference type="NCBI Taxonomy" id="331112"/>
    <lineage>
        <taxon>Bacteria</taxon>
        <taxon>Pseudomonadati</taxon>
        <taxon>Pseudomonadota</taxon>
        <taxon>Gammaproteobacteria</taxon>
        <taxon>Enterobacterales</taxon>
        <taxon>Enterobacteriaceae</taxon>
        <taxon>Escherichia</taxon>
    </lineage>
</organism>
<name>YQGE_ECOHS</name>
<accession>A8A488</accession>
<protein>
    <recommendedName>
        <fullName evidence="1">UPF0301 protein YqgE</fullName>
    </recommendedName>
</protein>
<sequence length="187" mass="20686">MNLQHHFLIAMPALQDPIFRRSVVYICEHNTNGAMGIIVNKPLENLKIEGILEKLKITPEPRDESIRLDKPVMLGGPLAEDRGFILHTPPSNFASSIRISDNTVMTTSRDVLETLGTDKQPSDVLVALGYASWEKGQLEQEILDNAWLTAPADLNILFKTPIADRWREAAKLIGVDILTMPGVAGHA</sequence>
<feature type="chain" id="PRO_1000062195" description="UPF0301 protein YqgE">
    <location>
        <begin position="1"/>
        <end position="187"/>
    </location>
</feature>
<proteinExistence type="inferred from homology"/>
<dbReference type="EMBL" id="CP000802">
    <property type="protein sequence ID" value="ABV07342.1"/>
    <property type="molecule type" value="Genomic_DNA"/>
</dbReference>
<dbReference type="RefSeq" id="WP_001053178.1">
    <property type="nucleotide sequence ID" value="NC_009800.1"/>
</dbReference>
<dbReference type="SMR" id="A8A488"/>
<dbReference type="KEGG" id="ecx:EcHS_A3106"/>
<dbReference type="HOGENOM" id="CLU_057596_1_0_6"/>
<dbReference type="GO" id="GO:0005829">
    <property type="term" value="C:cytosol"/>
    <property type="evidence" value="ECO:0007669"/>
    <property type="project" value="TreeGrafter"/>
</dbReference>
<dbReference type="FunFam" id="3.30.70.1300:FF:000001">
    <property type="entry name" value="UPF0301 protein YqgE"/>
    <property type="match status" value="1"/>
</dbReference>
<dbReference type="Gene3D" id="3.40.1740.10">
    <property type="entry name" value="VC0467-like"/>
    <property type="match status" value="1"/>
</dbReference>
<dbReference type="Gene3D" id="3.30.70.1300">
    <property type="entry name" value="VC0467-like domains"/>
    <property type="match status" value="1"/>
</dbReference>
<dbReference type="HAMAP" id="MF_00758">
    <property type="entry name" value="UPF0301"/>
    <property type="match status" value="1"/>
</dbReference>
<dbReference type="InterPro" id="IPR003774">
    <property type="entry name" value="AlgH-like"/>
</dbReference>
<dbReference type="NCBIfam" id="NF001266">
    <property type="entry name" value="PRK00228.1-1"/>
    <property type="match status" value="1"/>
</dbReference>
<dbReference type="PANTHER" id="PTHR30327">
    <property type="entry name" value="UNCHARACTERIZED PROTEIN YQGE"/>
    <property type="match status" value="1"/>
</dbReference>
<dbReference type="PANTHER" id="PTHR30327:SF1">
    <property type="entry name" value="UPF0301 PROTEIN YQGE"/>
    <property type="match status" value="1"/>
</dbReference>
<dbReference type="Pfam" id="PF02622">
    <property type="entry name" value="DUF179"/>
    <property type="match status" value="1"/>
</dbReference>
<dbReference type="SUPFAM" id="SSF143456">
    <property type="entry name" value="VC0467-like"/>
    <property type="match status" value="1"/>
</dbReference>
<reference key="1">
    <citation type="journal article" date="2008" name="J. Bacteriol.">
        <title>The pangenome structure of Escherichia coli: comparative genomic analysis of E. coli commensal and pathogenic isolates.</title>
        <authorList>
            <person name="Rasko D.A."/>
            <person name="Rosovitz M.J."/>
            <person name="Myers G.S.A."/>
            <person name="Mongodin E.F."/>
            <person name="Fricke W.F."/>
            <person name="Gajer P."/>
            <person name="Crabtree J."/>
            <person name="Sebaihia M."/>
            <person name="Thomson N.R."/>
            <person name="Chaudhuri R."/>
            <person name="Henderson I.R."/>
            <person name="Sperandio V."/>
            <person name="Ravel J."/>
        </authorList>
    </citation>
    <scope>NUCLEOTIDE SEQUENCE [LARGE SCALE GENOMIC DNA]</scope>
    <source>
        <strain>HS</strain>
    </source>
</reference>
<comment type="similarity">
    <text evidence="1">Belongs to the UPF0301 (AlgH) family.</text>
</comment>